<keyword id="KW-0007">Acetylation</keyword>
<keyword id="KW-0966">Cell projection</keyword>
<keyword id="KW-0157">Chromophore</keyword>
<keyword id="KW-1015">Disulfide bond</keyword>
<keyword id="KW-0297">G-protein coupled receptor</keyword>
<keyword id="KW-0325">Glycoprotein</keyword>
<keyword id="KW-0449">Lipoprotein</keyword>
<keyword id="KW-0472">Membrane</keyword>
<keyword id="KW-0479">Metal-binding</keyword>
<keyword id="KW-0564">Palmitate</keyword>
<keyword id="KW-0597">Phosphoprotein</keyword>
<keyword id="KW-0600">Photoreceptor protein</keyword>
<keyword id="KW-0675">Receptor</keyword>
<keyword id="KW-0681">Retinal protein</keyword>
<keyword id="KW-0716">Sensory transduction</keyword>
<keyword id="KW-0807">Transducer</keyword>
<keyword id="KW-0812">Transmembrane</keyword>
<keyword id="KW-1133">Transmembrane helix</keyword>
<keyword id="KW-0844">Vision</keyword>
<keyword id="KW-0862">Zinc</keyword>
<comment type="function">
    <text evidence="1 3">Photoreceptor required for image-forming vision at low light intensity. Required for photoreceptor cell viability after birth (By similarity). Light-induced isomerization of 11-cis to all-trans retinal triggers a conformational change that activates signaling via G-proteins. Subsequent receptor phosphorylation mediates displacement of the bound G-protein alpha subunit by the arrestin SAG and terminates signaling (By similarity).</text>
</comment>
<comment type="subunit">
    <text evidence="1 3 4">Homodimer. May form a complex composed of RHO, GRK1 and RCVRN in a Ca(2+)-dependent manner; RCVRN prevents the interaction between GRK1 and RHO (By similarity). Interacts with GRK1 (By similarity). Interacts (phosphorylated form) with SAG (By similarity). Interacts with GNAT1 (By similarity). Interacts with GNAT3. SAG and G-proteins compete for a common binding site (By similarity). Interacts with PRCD; the interaction promotes PRCD stability (By similarity). Forms a complex with ASAP1 and ARF4. Forms a complex with ASAP1, RAB11A, Rabin8/RAB3IP, ARF4 and RAB11FIP3; the complex regulates Golgi-to-cilia rhodopsin/RHO transport in photoreceptors (By similarity).</text>
</comment>
<comment type="subcellular location">
    <subcellularLocation>
        <location evidence="1">Membrane</location>
        <topology evidence="1">Multi-pass membrane protein</topology>
    </subcellularLocation>
    <subcellularLocation>
        <location evidence="1">Cell projection</location>
        <location evidence="1">Cilium</location>
        <location evidence="1">Photoreceptor outer segment</location>
    </subcellularLocation>
    <text evidence="3">Synthesized in the inner segment (IS) of rod photoreceptor cells before vectorial transport to disk membranes in the rod outer segment (OS) photosensory cilia.</text>
</comment>
<comment type="PTM">
    <text evidence="1">Phosphorylated on some or all of the serine and threonine residues present in the C-terminal region.</text>
</comment>
<comment type="PTM">
    <text evidence="1">Contains one covalently linked retinal chromophore. Upon light absorption, the covalently bound 11-cis-retinal is converted to all-trans-retinal. After hydrolysis of the Schiff base and release of the covalently bound all-trans-retinal, active rhodopsin is regenerated by binding of a fresh molecule of 11-cis-retinal.</text>
</comment>
<comment type="similarity">
    <text evidence="6">Belongs to the G-protein coupled receptor 1 family. Opsin subfamily.</text>
</comment>
<dbReference type="EMBL" id="AF055319">
    <property type="protein sequence ID" value="AAC12766.1"/>
    <property type="molecule type" value="mRNA"/>
</dbReference>
<dbReference type="SMR" id="O62796"/>
<dbReference type="GlyCosmos" id="O62796">
    <property type="glycosylation" value="2 sites, No reported glycans"/>
</dbReference>
<dbReference type="GO" id="GO:0016020">
    <property type="term" value="C:membrane"/>
    <property type="evidence" value="ECO:0000250"/>
    <property type="project" value="UniProtKB"/>
</dbReference>
<dbReference type="GO" id="GO:0097381">
    <property type="term" value="C:photoreceptor disc membrane"/>
    <property type="evidence" value="ECO:0000250"/>
    <property type="project" value="UniProtKB"/>
</dbReference>
<dbReference type="GO" id="GO:0060342">
    <property type="term" value="C:photoreceptor inner segment membrane"/>
    <property type="evidence" value="ECO:0000250"/>
    <property type="project" value="UniProtKB"/>
</dbReference>
<dbReference type="GO" id="GO:0042622">
    <property type="term" value="C:photoreceptor outer segment membrane"/>
    <property type="evidence" value="ECO:0000250"/>
    <property type="project" value="UniProtKB"/>
</dbReference>
<dbReference type="GO" id="GO:0005886">
    <property type="term" value="C:plasma membrane"/>
    <property type="evidence" value="ECO:0000250"/>
    <property type="project" value="UniProtKB"/>
</dbReference>
<dbReference type="GO" id="GO:0005502">
    <property type="term" value="F:11-cis retinal binding"/>
    <property type="evidence" value="ECO:0000250"/>
    <property type="project" value="UniProtKB"/>
</dbReference>
<dbReference type="GO" id="GO:0008020">
    <property type="term" value="F:G protein-coupled photoreceptor activity"/>
    <property type="evidence" value="ECO:0000250"/>
    <property type="project" value="UniProtKB"/>
</dbReference>
<dbReference type="GO" id="GO:0046872">
    <property type="term" value="F:metal ion binding"/>
    <property type="evidence" value="ECO:0007669"/>
    <property type="project" value="UniProtKB-KW"/>
</dbReference>
<dbReference type="GO" id="GO:0016038">
    <property type="term" value="P:absorption of visible light"/>
    <property type="evidence" value="ECO:0000250"/>
    <property type="project" value="AgBase"/>
</dbReference>
<dbReference type="GO" id="GO:0016056">
    <property type="term" value="P:G protein-coupled opsin signaling pathway"/>
    <property type="evidence" value="ECO:0000250"/>
    <property type="project" value="UniProtKB"/>
</dbReference>
<dbReference type="GO" id="GO:0007601">
    <property type="term" value="P:visual perception"/>
    <property type="evidence" value="ECO:0007669"/>
    <property type="project" value="UniProtKB-KW"/>
</dbReference>
<dbReference type="CDD" id="cd15080">
    <property type="entry name" value="7tmA_MWS_opsin"/>
    <property type="match status" value="1"/>
</dbReference>
<dbReference type="FunFam" id="1.20.1070.10:FF:000018">
    <property type="entry name" value="Rhodopsin"/>
    <property type="match status" value="1"/>
</dbReference>
<dbReference type="Gene3D" id="1.20.1070.10">
    <property type="entry name" value="Rhodopsin 7-helix transmembrane proteins"/>
    <property type="match status" value="1"/>
</dbReference>
<dbReference type="InterPro" id="IPR050125">
    <property type="entry name" value="GPCR_opsins"/>
</dbReference>
<dbReference type="InterPro" id="IPR000276">
    <property type="entry name" value="GPCR_Rhodpsn"/>
</dbReference>
<dbReference type="InterPro" id="IPR017452">
    <property type="entry name" value="GPCR_Rhodpsn_7TM"/>
</dbReference>
<dbReference type="InterPro" id="IPR001760">
    <property type="entry name" value="Opsin"/>
</dbReference>
<dbReference type="InterPro" id="IPR027430">
    <property type="entry name" value="Retinal_BS"/>
</dbReference>
<dbReference type="InterPro" id="IPR000732">
    <property type="entry name" value="Rhodopsin"/>
</dbReference>
<dbReference type="InterPro" id="IPR019477">
    <property type="entry name" value="Rhodopsin_N"/>
</dbReference>
<dbReference type="PANTHER" id="PTHR24240">
    <property type="entry name" value="OPSIN"/>
    <property type="match status" value="1"/>
</dbReference>
<dbReference type="Pfam" id="PF00001">
    <property type="entry name" value="7tm_1"/>
    <property type="match status" value="1"/>
</dbReference>
<dbReference type="Pfam" id="PF10413">
    <property type="entry name" value="Rhodopsin_N"/>
    <property type="match status" value="1"/>
</dbReference>
<dbReference type="PRINTS" id="PR00237">
    <property type="entry name" value="GPCRRHODOPSN"/>
</dbReference>
<dbReference type="PRINTS" id="PR00238">
    <property type="entry name" value="OPSIN"/>
</dbReference>
<dbReference type="PRINTS" id="PR00579">
    <property type="entry name" value="RHODOPSIN"/>
</dbReference>
<dbReference type="SUPFAM" id="SSF81321">
    <property type="entry name" value="Family A G protein-coupled receptor-like"/>
    <property type="match status" value="1"/>
</dbReference>
<dbReference type="PROSITE" id="PS00237">
    <property type="entry name" value="G_PROTEIN_RECEP_F1_1"/>
    <property type="match status" value="1"/>
</dbReference>
<dbReference type="PROSITE" id="PS50262">
    <property type="entry name" value="G_PROTEIN_RECEP_F1_2"/>
    <property type="match status" value="1"/>
</dbReference>
<dbReference type="PROSITE" id="PS00238">
    <property type="entry name" value="OPSIN"/>
    <property type="match status" value="1"/>
</dbReference>
<organism>
    <name type="scientific">Trichechus manatus</name>
    <name type="common">Caribbean manatee</name>
    <name type="synonym">West Indian manatee</name>
    <dbReference type="NCBI Taxonomy" id="9778"/>
    <lineage>
        <taxon>Eukaryota</taxon>
        <taxon>Metazoa</taxon>
        <taxon>Chordata</taxon>
        <taxon>Craniata</taxon>
        <taxon>Vertebrata</taxon>
        <taxon>Euteleostomi</taxon>
        <taxon>Mammalia</taxon>
        <taxon>Eutheria</taxon>
        <taxon>Afrotheria</taxon>
        <taxon>Sirenia</taxon>
        <taxon>Trichechidae</taxon>
        <taxon>Trichechus</taxon>
    </lineage>
</organism>
<proteinExistence type="evidence at transcript level"/>
<gene>
    <name type="primary">RHO</name>
</gene>
<name>OPSD_TRIMA</name>
<evidence type="ECO:0000250" key="1">
    <source>
        <dbReference type="UniProtKB" id="P02699"/>
    </source>
</evidence>
<evidence type="ECO:0000250" key="2">
    <source>
        <dbReference type="UniProtKB" id="P02700"/>
    </source>
</evidence>
<evidence type="ECO:0000250" key="3">
    <source>
        <dbReference type="UniProtKB" id="P08100"/>
    </source>
</evidence>
<evidence type="ECO:0000250" key="4">
    <source>
        <dbReference type="UniProtKB" id="P15409"/>
    </source>
</evidence>
<evidence type="ECO:0000255" key="5"/>
<evidence type="ECO:0000255" key="6">
    <source>
        <dbReference type="PROSITE-ProRule" id="PRU00521"/>
    </source>
</evidence>
<evidence type="ECO:0000305" key="7"/>
<reference key="1">
    <citation type="submission" date="1998-03" db="EMBL/GenBank/DDBJ databases">
        <authorList>
            <person name="Fasick J.I."/>
            <person name="Robinson P.R."/>
        </authorList>
    </citation>
    <scope>NUCLEOTIDE SEQUENCE [MRNA]</scope>
</reference>
<protein>
    <recommendedName>
        <fullName>Rhodopsin</fullName>
    </recommendedName>
</protein>
<accession>O62796</accession>
<sequence>MNGTEGPNFYVPFSNKTGVVRSPFEYPQYYLAEPWQFSMLAAYMFLLIVLGFPINFLTLYVTVQHKKLRTPLNYILLNLAVADLFMVFGGFTTTLYTSLHGYFVFGPTGCNVEGFFATLGGEIALWSLVVLAIERYVVVCKPMSNFRFGENHAIMGVAFTWVMALACAAPPLAGWSRYIPEGMQCSCGIDYYTLKPEVNNESFVIYMFVVHFTIPMIVIFFCYGQLVFTVKEAAAQQQESATTQKAEKEVTRMVIIMVIAFLICWVPYASVAFYIFTHQGSNFGPIFMTLPAFFAKSASIYNPVIYIMMNKQFRNCMLTTICCGKNPFAEEEGATTVSKTETSQVAPA</sequence>
<feature type="chain" id="PRO_0000197725" description="Rhodopsin">
    <location>
        <begin position="1"/>
        <end position="348"/>
    </location>
</feature>
<feature type="topological domain" description="Extracellular" evidence="7">
    <location>
        <begin position="1"/>
        <end position="36"/>
    </location>
</feature>
<feature type="transmembrane region" description="Helical; Name=1" evidence="1">
    <location>
        <begin position="37"/>
        <end position="61"/>
    </location>
</feature>
<feature type="topological domain" description="Cytoplasmic" evidence="7">
    <location>
        <begin position="62"/>
        <end position="73"/>
    </location>
</feature>
<feature type="transmembrane region" description="Helical; Name=2" evidence="1">
    <location>
        <begin position="74"/>
        <end position="96"/>
    </location>
</feature>
<feature type="topological domain" description="Extracellular" evidence="7">
    <location>
        <begin position="97"/>
        <end position="110"/>
    </location>
</feature>
<feature type="transmembrane region" description="Helical; Name=3" evidence="1">
    <location>
        <begin position="111"/>
        <end position="133"/>
    </location>
</feature>
<feature type="topological domain" description="Cytoplasmic" evidence="7">
    <location>
        <begin position="134"/>
        <end position="152"/>
    </location>
</feature>
<feature type="transmembrane region" description="Helical; Name=4" evidence="1">
    <location>
        <begin position="153"/>
        <end position="173"/>
    </location>
</feature>
<feature type="topological domain" description="Extracellular" evidence="7">
    <location>
        <begin position="174"/>
        <end position="202"/>
    </location>
</feature>
<feature type="transmembrane region" description="Helical; Name=5" evidence="1">
    <location>
        <begin position="203"/>
        <end position="224"/>
    </location>
</feature>
<feature type="topological domain" description="Cytoplasmic" evidence="7">
    <location>
        <begin position="225"/>
        <end position="252"/>
    </location>
</feature>
<feature type="transmembrane region" description="Helical; Name=6" evidence="1">
    <location>
        <begin position="253"/>
        <end position="274"/>
    </location>
</feature>
<feature type="topological domain" description="Extracellular" evidence="7">
    <location>
        <begin position="275"/>
        <end position="286"/>
    </location>
</feature>
<feature type="transmembrane region" description="Helical; Name=7" evidence="1">
    <location>
        <begin position="287"/>
        <end position="308"/>
    </location>
</feature>
<feature type="topological domain" description="Cytoplasmic" evidence="7">
    <location>
        <begin position="309"/>
        <end position="348"/>
    </location>
</feature>
<feature type="region of interest" description="Interaction with SAG" evidence="1">
    <location>
        <begin position="330"/>
        <end position="348"/>
    </location>
</feature>
<feature type="short sequence motif" description="'Ionic lock' involved in activated form stabilization" evidence="1">
    <location>
        <begin position="134"/>
        <end position="136"/>
    </location>
</feature>
<feature type="binding site" evidence="1">
    <location>
        <position position="201"/>
    </location>
    <ligand>
        <name>Zn(2+)</name>
        <dbReference type="ChEBI" id="CHEBI:29105"/>
    </ligand>
</feature>
<feature type="binding site" evidence="1">
    <location>
        <position position="279"/>
    </location>
    <ligand>
        <name>Zn(2+)</name>
        <dbReference type="ChEBI" id="CHEBI:29105"/>
    </ligand>
</feature>
<feature type="site" description="Plays an important role in the conformation switch to the active conformation" evidence="1">
    <location>
        <position position="113"/>
    </location>
</feature>
<feature type="modified residue" description="N-acetylmethionine" evidence="1">
    <location>
        <position position="1"/>
    </location>
</feature>
<feature type="modified residue" description="N6-(retinylidene)lysine" evidence="1">
    <location>
        <position position="296"/>
    </location>
</feature>
<feature type="modified residue" description="Phosphothreonine" evidence="2">
    <location>
        <position position="335"/>
    </location>
</feature>
<feature type="modified residue" description="Phosphothreonine" evidence="2">
    <location>
        <position position="336"/>
    </location>
</feature>
<feature type="modified residue" description="Phosphoserine" evidence="2">
    <location>
        <position position="338"/>
    </location>
</feature>
<feature type="modified residue" description="Phosphothreonine" evidence="1">
    <location>
        <position position="340"/>
    </location>
</feature>
<feature type="modified residue" description="Phosphothreonine" evidence="1">
    <location>
        <position position="342"/>
    </location>
</feature>
<feature type="modified residue" description="Phosphoserine" evidence="1">
    <location>
        <position position="343"/>
    </location>
</feature>
<feature type="lipid moiety-binding region" description="S-palmitoyl cysteine" evidence="1">
    <location>
        <position position="322"/>
    </location>
</feature>
<feature type="lipid moiety-binding region" description="S-palmitoyl cysteine" evidence="1">
    <location>
        <position position="323"/>
    </location>
</feature>
<feature type="glycosylation site" description="N-linked (GlcNAc...) asparagine" evidence="5">
    <location>
        <position position="2"/>
    </location>
</feature>
<feature type="glycosylation site" description="N-linked (GlcNAc...) asparagine" evidence="5">
    <location>
        <position position="15"/>
    </location>
</feature>
<feature type="disulfide bond" evidence="6">
    <location>
        <begin position="110"/>
        <end position="187"/>
    </location>
</feature>